<keyword id="KW-1185">Reference proteome</keyword>
<keyword id="KW-0687">Ribonucleoprotein</keyword>
<keyword id="KW-0689">Ribosomal protein</keyword>
<sequence>MKRTYQPSKLVRKRRHGFMERMSSVGGRRVLMRRRMKGRRVLSA</sequence>
<protein>
    <recommendedName>
        <fullName evidence="1">Large ribosomal subunit protein bL34</fullName>
    </recommendedName>
    <alternativeName>
        <fullName evidence="2">50S ribosomal protein L34</fullName>
    </alternativeName>
</protein>
<accession>A5CCC8</accession>
<evidence type="ECO:0000255" key="1">
    <source>
        <dbReference type="HAMAP-Rule" id="MF_00391"/>
    </source>
</evidence>
<evidence type="ECO:0000305" key="2"/>
<proteinExistence type="inferred from homology"/>
<gene>
    <name evidence="1" type="primary">rpmH</name>
    <name type="ordered locus">OTBS_0257</name>
</gene>
<name>RL34_ORITB</name>
<feature type="chain" id="PRO_1000013393" description="Large ribosomal subunit protein bL34">
    <location>
        <begin position="1"/>
        <end position="44"/>
    </location>
</feature>
<comment type="similarity">
    <text evidence="1">Belongs to the bacterial ribosomal protein bL34 family.</text>
</comment>
<dbReference type="EMBL" id="AM494475">
    <property type="protein sequence ID" value="CAM79323.1"/>
    <property type="molecule type" value="Genomic_DNA"/>
</dbReference>
<dbReference type="SMR" id="A5CCC8"/>
<dbReference type="KEGG" id="ots:OTBS_0257"/>
<dbReference type="eggNOG" id="COG0230">
    <property type="taxonomic scope" value="Bacteria"/>
</dbReference>
<dbReference type="HOGENOM" id="CLU_129938_2_0_5"/>
<dbReference type="Proteomes" id="UP000001565">
    <property type="component" value="Chromosome"/>
</dbReference>
<dbReference type="GO" id="GO:1990904">
    <property type="term" value="C:ribonucleoprotein complex"/>
    <property type="evidence" value="ECO:0007669"/>
    <property type="project" value="UniProtKB-KW"/>
</dbReference>
<dbReference type="GO" id="GO:0005840">
    <property type="term" value="C:ribosome"/>
    <property type="evidence" value="ECO:0007669"/>
    <property type="project" value="UniProtKB-KW"/>
</dbReference>
<dbReference type="GO" id="GO:0003735">
    <property type="term" value="F:structural constituent of ribosome"/>
    <property type="evidence" value="ECO:0007669"/>
    <property type="project" value="InterPro"/>
</dbReference>
<dbReference type="GO" id="GO:0006412">
    <property type="term" value="P:translation"/>
    <property type="evidence" value="ECO:0007669"/>
    <property type="project" value="UniProtKB-UniRule"/>
</dbReference>
<dbReference type="FunFam" id="1.10.287.3980:FF:000001">
    <property type="entry name" value="Mitochondrial ribosomal protein L34"/>
    <property type="match status" value="1"/>
</dbReference>
<dbReference type="Gene3D" id="1.10.287.3980">
    <property type="match status" value="1"/>
</dbReference>
<dbReference type="HAMAP" id="MF_00391">
    <property type="entry name" value="Ribosomal_bL34"/>
    <property type="match status" value="1"/>
</dbReference>
<dbReference type="InterPro" id="IPR000271">
    <property type="entry name" value="Ribosomal_bL34"/>
</dbReference>
<dbReference type="InterPro" id="IPR020939">
    <property type="entry name" value="Ribosomal_bL34_CS"/>
</dbReference>
<dbReference type="NCBIfam" id="TIGR01030">
    <property type="entry name" value="rpmH_bact"/>
    <property type="match status" value="1"/>
</dbReference>
<dbReference type="PANTHER" id="PTHR14503:SF4">
    <property type="entry name" value="LARGE RIBOSOMAL SUBUNIT PROTEIN BL34M"/>
    <property type="match status" value="1"/>
</dbReference>
<dbReference type="PANTHER" id="PTHR14503">
    <property type="entry name" value="MITOCHONDRIAL RIBOSOMAL PROTEIN 34 FAMILY MEMBER"/>
    <property type="match status" value="1"/>
</dbReference>
<dbReference type="Pfam" id="PF00468">
    <property type="entry name" value="Ribosomal_L34"/>
    <property type="match status" value="1"/>
</dbReference>
<dbReference type="PROSITE" id="PS00784">
    <property type="entry name" value="RIBOSOMAL_L34"/>
    <property type="match status" value="1"/>
</dbReference>
<reference key="1">
    <citation type="journal article" date="2007" name="Proc. Natl. Acad. Sci. U.S.A.">
        <title>The Orientia tsutsugamushi genome reveals massive proliferation of conjugative type IV secretion system and host-cell interaction genes.</title>
        <authorList>
            <person name="Cho N.-H."/>
            <person name="Kim H.-R."/>
            <person name="Lee J.-H."/>
            <person name="Kim S.-Y."/>
            <person name="Kim J."/>
            <person name="Cha S."/>
            <person name="Kim S.-Y."/>
            <person name="Darby A.C."/>
            <person name="Fuxelius H.-H."/>
            <person name="Yin J."/>
            <person name="Kim J.H."/>
            <person name="Kim J."/>
            <person name="Lee S.J."/>
            <person name="Koh Y.-S."/>
            <person name="Jang W.-J."/>
            <person name="Park K.-H."/>
            <person name="Andersson S.G.E."/>
            <person name="Choi M.-S."/>
            <person name="Kim I.-S."/>
        </authorList>
    </citation>
    <scope>NUCLEOTIDE SEQUENCE [LARGE SCALE GENOMIC DNA]</scope>
    <source>
        <strain>Boryong</strain>
    </source>
</reference>
<organism>
    <name type="scientific">Orientia tsutsugamushi (strain Boryong)</name>
    <name type="common">Rickettsia tsutsugamushi</name>
    <dbReference type="NCBI Taxonomy" id="357244"/>
    <lineage>
        <taxon>Bacteria</taxon>
        <taxon>Pseudomonadati</taxon>
        <taxon>Pseudomonadota</taxon>
        <taxon>Alphaproteobacteria</taxon>
        <taxon>Rickettsiales</taxon>
        <taxon>Rickettsiaceae</taxon>
        <taxon>Rickettsieae</taxon>
        <taxon>Orientia</taxon>
    </lineage>
</organism>